<proteinExistence type="inferred from homology"/>
<dbReference type="EMBL" id="AF376875">
    <property type="protein sequence ID" value="AAK57694.1"/>
    <property type="molecule type" value="Genomic_DNA"/>
</dbReference>
<dbReference type="GO" id="GO:0005743">
    <property type="term" value="C:mitochondrial inner membrane"/>
    <property type="evidence" value="ECO:0007669"/>
    <property type="project" value="UniProtKB-SubCell"/>
</dbReference>
<dbReference type="GO" id="GO:0045275">
    <property type="term" value="C:respiratory chain complex III"/>
    <property type="evidence" value="ECO:0007669"/>
    <property type="project" value="InterPro"/>
</dbReference>
<dbReference type="GO" id="GO:0046872">
    <property type="term" value="F:metal ion binding"/>
    <property type="evidence" value="ECO:0007669"/>
    <property type="project" value="UniProtKB-KW"/>
</dbReference>
<dbReference type="GO" id="GO:0008121">
    <property type="term" value="F:ubiquinol-cytochrome-c reductase activity"/>
    <property type="evidence" value="ECO:0007669"/>
    <property type="project" value="InterPro"/>
</dbReference>
<dbReference type="GO" id="GO:0006122">
    <property type="term" value="P:mitochondrial electron transport, ubiquinol to cytochrome c"/>
    <property type="evidence" value="ECO:0007669"/>
    <property type="project" value="TreeGrafter"/>
</dbReference>
<dbReference type="CDD" id="cd00290">
    <property type="entry name" value="cytochrome_b_C"/>
    <property type="match status" value="1"/>
</dbReference>
<dbReference type="CDD" id="cd00284">
    <property type="entry name" value="Cytochrome_b_N"/>
    <property type="match status" value="1"/>
</dbReference>
<dbReference type="FunFam" id="1.20.810.10:FF:000002">
    <property type="entry name" value="Cytochrome b"/>
    <property type="match status" value="1"/>
</dbReference>
<dbReference type="Gene3D" id="1.20.810.10">
    <property type="entry name" value="Cytochrome Bc1 Complex, Chain C"/>
    <property type="match status" value="1"/>
</dbReference>
<dbReference type="InterPro" id="IPR005798">
    <property type="entry name" value="Cyt_b/b6_C"/>
</dbReference>
<dbReference type="InterPro" id="IPR036150">
    <property type="entry name" value="Cyt_b/b6_C_sf"/>
</dbReference>
<dbReference type="InterPro" id="IPR005797">
    <property type="entry name" value="Cyt_b/b6_N"/>
</dbReference>
<dbReference type="InterPro" id="IPR027387">
    <property type="entry name" value="Cytb/b6-like_sf"/>
</dbReference>
<dbReference type="InterPro" id="IPR030689">
    <property type="entry name" value="Cytochrome_b"/>
</dbReference>
<dbReference type="InterPro" id="IPR048260">
    <property type="entry name" value="Cytochrome_b_C_euk/bac"/>
</dbReference>
<dbReference type="InterPro" id="IPR048259">
    <property type="entry name" value="Cytochrome_b_N_euk/bac"/>
</dbReference>
<dbReference type="InterPro" id="IPR016174">
    <property type="entry name" value="Di-haem_cyt_TM"/>
</dbReference>
<dbReference type="PANTHER" id="PTHR19271">
    <property type="entry name" value="CYTOCHROME B"/>
    <property type="match status" value="1"/>
</dbReference>
<dbReference type="PANTHER" id="PTHR19271:SF16">
    <property type="entry name" value="CYTOCHROME B"/>
    <property type="match status" value="1"/>
</dbReference>
<dbReference type="Pfam" id="PF00032">
    <property type="entry name" value="Cytochrom_B_C"/>
    <property type="match status" value="1"/>
</dbReference>
<dbReference type="Pfam" id="PF00033">
    <property type="entry name" value="Cytochrome_B"/>
    <property type="match status" value="1"/>
</dbReference>
<dbReference type="PIRSF" id="PIRSF038885">
    <property type="entry name" value="COB"/>
    <property type="match status" value="1"/>
</dbReference>
<dbReference type="SUPFAM" id="SSF81648">
    <property type="entry name" value="a domain/subunit of cytochrome bc1 complex (Ubiquinol-cytochrome c reductase)"/>
    <property type="match status" value="1"/>
</dbReference>
<dbReference type="SUPFAM" id="SSF81342">
    <property type="entry name" value="Transmembrane di-heme cytochromes"/>
    <property type="match status" value="1"/>
</dbReference>
<dbReference type="PROSITE" id="PS51003">
    <property type="entry name" value="CYTB_CTER"/>
    <property type="match status" value="1"/>
</dbReference>
<dbReference type="PROSITE" id="PS51002">
    <property type="entry name" value="CYTB_NTER"/>
    <property type="match status" value="1"/>
</dbReference>
<name>CYB_MYOYU</name>
<protein>
    <recommendedName>
        <fullName>Cytochrome b</fullName>
    </recommendedName>
    <alternativeName>
        <fullName>Complex III subunit 3</fullName>
    </alternativeName>
    <alternativeName>
        <fullName>Complex III subunit III</fullName>
    </alternativeName>
    <alternativeName>
        <fullName>Cytochrome b-c1 complex subunit 3</fullName>
    </alternativeName>
    <alternativeName>
        <fullName>Ubiquinol-cytochrome-c reductase complex cytochrome b subunit</fullName>
    </alternativeName>
</protein>
<organism>
    <name type="scientific">Myotis yumanensis</name>
    <name type="common">Yuma myotis</name>
    <name type="synonym">Vespertilio yumanensis</name>
    <dbReference type="NCBI Taxonomy" id="159337"/>
    <lineage>
        <taxon>Eukaryota</taxon>
        <taxon>Metazoa</taxon>
        <taxon>Chordata</taxon>
        <taxon>Craniata</taxon>
        <taxon>Vertebrata</taxon>
        <taxon>Euteleostomi</taxon>
        <taxon>Mammalia</taxon>
        <taxon>Eutheria</taxon>
        <taxon>Laurasiatheria</taxon>
        <taxon>Chiroptera</taxon>
        <taxon>Yangochiroptera</taxon>
        <taxon>Vespertilionidae</taxon>
        <taxon>Myotis</taxon>
    </lineage>
</organism>
<accession>Q956Y7</accession>
<geneLocation type="mitochondrion"/>
<evidence type="ECO:0000250" key="1"/>
<evidence type="ECO:0000250" key="2">
    <source>
        <dbReference type="UniProtKB" id="P00157"/>
    </source>
</evidence>
<evidence type="ECO:0000255" key="3">
    <source>
        <dbReference type="PROSITE-ProRule" id="PRU00967"/>
    </source>
</evidence>
<evidence type="ECO:0000255" key="4">
    <source>
        <dbReference type="PROSITE-ProRule" id="PRU00968"/>
    </source>
</evidence>
<keyword id="KW-0249">Electron transport</keyword>
<keyword id="KW-0349">Heme</keyword>
<keyword id="KW-0408">Iron</keyword>
<keyword id="KW-0472">Membrane</keyword>
<keyword id="KW-0479">Metal-binding</keyword>
<keyword id="KW-0496">Mitochondrion</keyword>
<keyword id="KW-0999">Mitochondrion inner membrane</keyword>
<keyword id="KW-0679">Respiratory chain</keyword>
<keyword id="KW-0812">Transmembrane</keyword>
<keyword id="KW-1133">Transmembrane helix</keyword>
<keyword id="KW-0813">Transport</keyword>
<keyword id="KW-0830">Ubiquinone</keyword>
<reference key="1">
    <citation type="journal article" date="2001" name="Mol. Phylogenet. Evol.">
        <title>Molecular systematics of bats of the genus Myotis (Vespertilionidae) suggests deterministic ecomorphological convergences.</title>
        <authorList>
            <person name="Ruedi M."/>
            <person name="Mayer F."/>
        </authorList>
    </citation>
    <scope>NUCLEOTIDE SEQUENCE [GENOMIC DNA]</scope>
    <source>
        <strain>Isolate MVZ 15585</strain>
    </source>
</reference>
<comment type="function">
    <text evidence="2">Component of the ubiquinol-cytochrome c reductase complex (complex III or cytochrome b-c1 complex) that is part of the mitochondrial respiratory chain. The b-c1 complex mediates electron transfer from ubiquinol to cytochrome c. Contributes to the generation of a proton gradient across the mitochondrial membrane that is then used for ATP synthesis.</text>
</comment>
<comment type="cofactor">
    <cofactor evidence="2">
        <name>heme b</name>
        <dbReference type="ChEBI" id="CHEBI:60344"/>
    </cofactor>
    <text evidence="2">Binds 2 heme b groups non-covalently.</text>
</comment>
<comment type="subunit">
    <text evidence="2">The cytochrome bc1 complex contains 11 subunits: 3 respiratory subunits (MT-CYB, CYC1 and UQCRFS1), 2 core proteins (UQCRC1 and UQCRC2) and 6 low-molecular weight proteins (UQCRH/QCR6, UQCRB/QCR7, UQCRQ/QCR8, UQCR10/QCR9, UQCR11/QCR10 and a cleavage product of UQCRFS1). This cytochrome bc1 complex then forms a dimer.</text>
</comment>
<comment type="subcellular location">
    <subcellularLocation>
        <location evidence="2">Mitochondrion inner membrane</location>
        <topology evidence="2">Multi-pass membrane protein</topology>
    </subcellularLocation>
</comment>
<comment type="miscellaneous">
    <text evidence="1">Heme 1 (or BL or b562) is low-potential and absorbs at about 562 nm, and heme 2 (or BH or b566) is high-potential and absorbs at about 566 nm.</text>
</comment>
<comment type="similarity">
    <text evidence="3 4">Belongs to the cytochrome b family.</text>
</comment>
<comment type="caution">
    <text evidence="2">The full-length protein contains only eight transmembrane helices, not nine as predicted by bioinformatics tools.</text>
</comment>
<gene>
    <name type="primary">MT-CYB</name>
    <name type="synonym">COB</name>
    <name type="synonym">CYTB</name>
    <name type="synonym">MTCYB</name>
</gene>
<feature type="chain" id="PRO_0000061258" description="Cytochrome b">
    <location>
        <begin position="1"/>
        <end position="379"/>
    </location>
</feature>
<feature type="transmembrane region" description="Helical" evidence="2">
    <location>
        <begin position="33"/>
        <end position="53"/>
    </location>
</feature>
<feature type="transmembrane region" description="Helical" evidence="2">
    <location>
        <begin position="77"/>
        <end position="98"/>
    </location>
</feature>
<feature type="transmembrane region" description="Helical" evidence="2">
    <location>
        <begin position="113"/>
        <end position="133"/>
    </location>
</feature>
<feature type="transmembrane region" description="Helical" evidence="2">
    <location>
        <begin position="178"/>
        <end position="198"/>
    </location>
</feature>
<feature type="transmembrane region" description="Helical" evidence="2">
    <location>
        <begin position="226"/>
        <end position="246"/>
    </location>
</feature>
<feature type="transmembrane region" description="Helical" evidence="2">
    <location>
        <begin position="288"/>
        <end position="308"/>
    </location>
</feature>
<feature type="transmembrane region" description="Helical" evidence="2">
    <location>
        <begin position="320"/>
        <end position="340"/>
    </location>
</feature>
<feature type="transmembrane region" description="Helical" evidence="2">
    <location>
        <begin position="347"/>
        <end position="367"/>
    </location>
</feature>
<feature type="binding site" description="axial binding residue" evidence="2">
    <location>
        <position position="83"/>
    </location>
    <ligand>
        <name>heme b</name>
        <dbReference type="ChEBI" id="CHEBI:60344"/>
        <label>b562</label>
    </ligand>
    <ligandPart>
        <name>Fe</name>
        <dbReference type="ChEBI" id="CHEBI:18248"/>
    </ligandPart>
</feature>
<feature type="binding site" description="axial binding residue" evidence="2">
    <location>
        <position position="97"/>
    </location>
    <ligand>
        <name>heme b</name>
        <dbReference type="ChEBI" id="CHEBI:60344"/>
        <label>b566</label>
    </ligand>
    <ligandPart>
        <name>Fe</name>
        <dbReference type="ChEBI" id="CHEBI:18248"/>
    </ligandPart>
</feature>
<feature type="binding site" description="axial binding residue" evidence="2">
    <location>
        <position position="182"/>
    </location>
    <ligand>
        <name>heme b</name>
        <dbReference type="ChEBI" id="CHEBI:60344"/>
        <label>b562</label>
    </ligand>
    <ligandPart>
        <name>Fe</name>
        <dbReference type="ChEBI" id="CHEBI:18248"/>
    </ligandPart>
</feature>
<feature type="binding site" description="axial binding residue" evidence="2">
    <location>
        <position position="196"/>
    </location>
    <ligand>
        <name>heme b</name>
        <dbReference type="ChEBI" id="CHEBI:60344"/>
        <label>b566</label>
    </ligand>
    <ligandPart>
        <name>Fe</name>
        <dbReference type="ChEBI" id="CHEBI:18248"/>
    </ligandPart>
</feature>
<feature type="binding site" evidence="2">
    <location>
        <position position="201"/>
    </location>
    <ligand>
        <name>a ubiquinone</name>
        <dbReference type="ChEBI" id="CHEBI:16389"/>
    </ligand>
</feature>
<sequence>MTNIRKSHPLVKIINNSFIDLPAPSNISSWWNFGSLLGICLALQILTGLFLAMHYTSDTATAFNSVTHICRDVNYGWVLRYLHANGASMFFICLYLHVGRGLYYGSYMYMETWNIGVILLFAVMATAFMGYVLPWGQMSFWGATVITNLLSAIPYIGTDLVEWIWGGFSVDKATLTRFFAFHFLLPFIIAAMVMVHLLFLHETGSNNPTGIPANADMIPFHPYYTIKDILGLLLMITALLILVLFSPDLLGDPDNYTPANPLNTPPHIKPEWYFLFAYAILRSIPNKLGGVLALVLSILILVIVPLLHTSKQRSMTFRPLSQCLFWLLTADLFTLTWIGGQPVEHPYVIIGQVASILYLSIIILLMPLTSLXENHXLKW</sequence>